<sequence length="447" mass="49539">MNAWEVNFDGLVGLTHHYAGLSFGNEASTRHRFQVSNPRLAAKQGLLKMKKLADAGFPQAVIPPHERPFIPVLRQLGFRGSDEQVLEKVARQAPHWLSSVSSASPMWVANAATIAPSADTLDGKVHLTVANLNNKFHRSLEAPVTESLLKAIFNDEEKFSVHSALPQVALLGDEGAANHNRLGGHYGEPGMQLFVYGREEGNDTRPSRYPARQTREASEAVARLNQVNPQQVIFAQQNPDVIDQGVFHNDVIAVSNRQVLFCHQQAFARQSQLLANLRARVNGFMAIEVPATQVFVSDAVSTYLFNSQLLSRDDGSMVLVLPQECREHAGVWRYLNELLAADNPISELKVFDLRESMANGGGPACLRLRVVLTEEERRAVNPAVMMNDTLFNALNDWVDRYYRDRLTAADLADPQLLREGREALDTLTQLLDLGSVYPFQREGGGNG</sequence>
<name>ASTB_ECOUT</name>
<organism>
    <name type="scientific">Escherichia coli (strain UTI89 / UPEC)</name>
    <dbReference type="NCBI Taxonomy" id="364106"/>
    <lineage>
        <taxon>Bacteria</taxon>
        <taxon>Pseudomonadati</taxon>
        <taxon>Pseudomonadota</taxon>
        <taxon>Gammaproteobacteria</taxon>
        <taxon>Enterobacterales</taxon>
        <taxon>Enterobacteriaceae</taxon>
        <taxon>Escherichia</taxon>
    </lineage>
</organism>
<protein>
    <recommendedName>
        <fullName evidence="1">N-succinylarginine dihydrolase</fullName>
        <ecNumber evidence="1">3.5.3.23</ecNumber>
    </recommendedName>
</protein>
<gene>
    <name evidence="1" type="primary">astB</name>
    <name type="ordered locus">UTI89_C1940</name>
</gene>
<evidence type="ECO:0000255" key="1">
    <source>
        <dbReference type="HAMAP-Rule" id="MF_01172"/>
    </source>
</evidence>
<comment type="function">
    <text evidence="1">Catalyzes the hydrolysis of N(2)-succinylarginine into N(2)-succinylornithine, ammonia and CO(2).</text>
</comment>
<comment type="catalytic activity">
    <reaction evidence="1">
        <text>N(2)-succinyl-L-arginine + 2 H2O + 2 H(+) = N(2)-succinyl-L-ornithine + 2 NH4(+) + CO2</text>
        <dbReference type="Rhea" id="RHEA:19533"/>
        <dbReference type="ChEBI" id="CHEBI:15377"/>
        <dbReference type="ChEBI" id="CHEBI:15378"/>
        <dbReference type="ChEBI" id="CHEBI:16526"/>
        <dbReference type="ChEBI" id="CHEBI:28938"/>
        <dbReference type="ChEBI" id="CHEBI:58241"/>
        <dbReference type="ChEBI" id="CHEBI:58514"/>
        <dbReference type="EC" id="3.5.3.23"/>
    </reaction>
</comment>
<comment type="pathway">
    <text evidence="1">Amino-acid degradation; L-arginine degradation via AST pathway; L-glutamate and succinate from L-arginine: step 2/5.</text>
</comment>
<comment type="subunit">
    <text evidence="1">Homodimer.</text>
</comment>
<comment type="similarity">
    <text evidence="1">Belongs to the succinylarginine dihydrolase family.</text>
</comment>
<dbReference type="EC" id="3.5.3.23" evidence="1"/>
<dbReference type="EMBL" id="CP000243">
    <property type="protein sequence ID" value="ABE07416.1"/>
    <property type="molecule type" value="Genomic_DNA"/>
</dbReference>
<dbReference type="RefSeq" id="WP_000994978.1">
    <property type="nucleotide sequence ID" value="NZ_CP064825.1"/>
</dbReference>
<dbReference type="SMR" id="Q1RB48"/>
<dbReference type="KEGG" id="eci:UTI89_C1940"/>
<dbReference type="HOGENOM" id="CLU_053835_0_0_6"/>
<dbReference type="UniPathway" id="UPA00185">
    <property type="reaction ID" value="UER00280"/>
</dbReference>
<dbReference type="Proteomes" id="UP000001952">
    <property type="component" value="Chromosome"/>
</dbReference>
<dbReference type="GO" id="GO:0009015">
    <property type="term" value="F:N-succinylarginine dihydrolase activity"/>
    <property type="evidence" value="ECO:0007669"/>
    <property type="project" value="UniProtKB-UniRule"/>
</dbReference>
<dbReference type="GO" id="GO:0019544">
    <property type="term" value="P:arginine catabolic process to glutamate"/>
    <property type="evidence" value="ECO:0007669"/>
    <property type="project" value="UniProtKB-UniRule"/>
</dbReference>
<dbReference type="GO" id="GO:0019545">
    <property type="term" value="P:arginine catabolic process to succinate"/>
    <property type="evidence" value="ECO:0007669"/>
    <property type="project" value="UniProtKB-UniRule"/>
</dbReference>
<dbReference type="FunFam" id="3.75.10.20:FF:000001">
    <property type="entry name" value="N-succinylarginine dihydrolase"/>
    <property type="match status" value="1"/>
</dbReference>
<dbReference type="Gene3D" id="3.75.10.20">
    <property type="entry name" value="Succinylarginine dihydrolase"/>
    <property type="match status" value="1"/>
</dbReference>
<dbReference type="HAMAP" id="MF_01172">
    <property type="entry name" value="AstB"/>
    <property type="match status" value="1"/>
</dbReference>
<dbReference type="InterPro" id="IPR037031">
    <property type="entry name" value="AstB_sf"/>
</dbReference>
<dbReference type="InterPro" id="IPR007079">
    <property type="entry name" value="SuccinylArg_d-Hdrlase_AstB"/>
</dbReference>
<dbReference type="NCBIfam" id="TIGR03241">
    <property type="entry name" value="arg_catab_astB"/>
    <property type="match status" value="1"/>
</dbReference>
<dbReference type="NCBIfam" id="NF009789">
    <property type="entry name" value="PRK13281.1"/>
    <property type="match status" value="1"/>
</dbReference>
<dbReference type="PANTHER" id="PTHR30420">
    <property type="entry name" value="N-SUCCINYLARGININE DIHYDROLASE"/>
    <property type="match status" value="1"/>
</dbReference>
<dbReference type="PANTHER" id="PTHR30420:SF2">
    <property type="entry name" value="N-SUCCINYLARGININE DIHYDROLASE"/>
    <property type="match status" value="1"/>
</dbReference>
<dbReference type="Pfam" id="PF04996">
    <property type="entry name" value="AstB"/>
    <property type="match status" value="1"/>
</dbReference>
<dbReference type="SUPFAM" id="SSF55909">
    <property type="entry name" value="Pentein"/>
    <property type="match status" value="1"/>
</dbReference>
<reference key="1">
    <citation type="journal article" date="2006" name="Proc. Natl. Acad. Sci. U.S.A.">
        <title>Identification of genes subject to positive selection in uropathogenic strains of Escherichia coli: a comparative genomics approach.</title>
        <authorList>
            <person name="Chen S.L."/>
            <person name="Hung C.-S."/>
            <person name="Xu J."/>
            <person name="Reigstad C.S."/>
            <person name="Magrini V."/>
            <person name="Sabo A."/>
            <person name="Blasiar D."/>
            <person name="Bieri T."/>
            <person name="Meyer R.R."/>
            <person name="Ozersky P."/>
            <person name="Armstrong J.R."/>
            <person name="Fulton R.S."/>
            <person name="Latreille J.P."/>
            <person name="Spieth J."/>
            <person name="Hooton T.M."/>
            <person name="Mardis E.R."/>
            <person name="Hultgren S.J."/>
            <person name="Gordon J.I."/>
        </authorList>
    </citation>
    <scope>NUCLEOTIDE SEQUENCE [LARGE SCALE GENOMIC DNA]</scope>
    <source>
        <strain>UTI89 / UPEC</strain>
    </source>
</reference>
<feature type="chain" id="PRO_0000262349" description="N-succinylarginine dihydrolase">
    <location>
        <begin position="1"/>
        <end position="447"/>
    </location>
</feature>
<feature type="active site" evidence="1">
    <location>
        <position position="174"/>
    </location>
</feature>
<feature type="active site" evidence="1">
    <location>
        <position position="248"/>
    </location>
</feature>
<feature type="active site" description="Nucleophile" evidence="1">
    <location>
        <position position="365"/>
    </location>
</feature>
<feature type="binding site" evidence="1">
    <location>
        <begin position="19"/>
        <end position="28"/>
    </location>
    <ligand>
        <name>substrate</name>
    </ligand>
</feature>
<feature type="binding site" evidence="1">
    <location>
        <position position="110"/>
    </location>
    <ligand>
        <name>substrate</name>
    </ligand>
</feature>
<feature type="binding site" evidence="1">
    <location>
        <begin position="137"/>
        <end position="138"/>
    </location>
    <ligand>
        <name>substrate</name>
    </ligand>
</feature>
<feature type="binding site" evidence="1">
    <location>
        <position position="212"/>
    </location>
    <ligand>
        <name>substrate</name>
    </ligand>
</feature>
<feature type="binding site" evidence="1">
    <location>
        <position position="250"/>
    </location>
    <ligand>
        <name>substrate</name>
    </ligand>
</feature>
<feature type="binding site" evidence="1">
    <location>
        <position position="359"/>
    </location>
    <ligand>
        <name>substrate</name>
    </ligand>
</feature>
<accession>Q1RB48</accession>
<keyword id="KW-0056">Arginine metabolism</keyword>
<keyword id="KW-0378">Hydrolase</keyword>
<proteinExistence type="inferred from homology"/>